<feature type="chain" id="PRO_0000069731" description="Melanocortin receptor 5">
    <location>
        <begin position="1" status="less than"/>
        <end position="294" status="greater than"/>
    </location>
</feature>
<feature type="topological domain" description="Extracellular" evidence="1">
    <location>
        <begin position="1" status="less than"/>
        <end position="29"/>
    </location>
</feature>
<feature type="transmembrane region" description="Helical; Name=1" evidence="1">
    <location>
        <begin position="30"/>
        <end position="53"/>
    </location>
</feature>
<feature type="topological domain" description="Cytoplasmic" evidence="1">
    <location>
        <begin position="54"/>
        <end position="65"/>
    </location>
</feature>
<feature type="transmembrane region" description="Helical; Name=2" evidence="1">
    <location>
        <begin position="66"/>
        <end position="89"/>
    </location>
</feature>
<feature type="topological domain" description="Extracellular" evidence="1">
    <location>
        <begin position="90"/>
        <end position="106"/>
    </location>
</feature>
<feature type="transmembrane region" description="Helical; Name=3" evidence="1">
    <location>
        <begin position="107"/>
        <end position="130"/>
    </location>
</feature>
<feature type="topological domain" description="Cytoplasmic" evidence="1">
    <location>
        <begin position="131"/>
        <end position="147"/>
    </location>
</feature>
<feature type="transmembrane region" description="Helical; Name=4" evidence="1">
    <location>
        <begin position="148"/>
        <end position="171"/>
    </location>
</feature>
<feature type="topological domain" description="Extracellular" evidence="1">
    <location>
        <begin position="172"/>
        <end position="178"/>
    </location>
</feature>
<feature type="transmembrane region" description="Helical; Name=5" evidence="1">
    <location>
        <begin position="179"/>
        <end position="203"/>
    </location>
</feature>
<feature type="topological domain" description="Cytoplasmic" evidence="1">
    <location>
        <begin position="204"/>
        <end position="231"/>
    </location>
</feature>
<feature type="transmembrane region" description="Helical; Name=6" evidence="1">
    <location>
        <begin position="232"/>
        <end position="257"/>
    </location>
</feature>
<feature type="topological domain" description="Extracellular" evidence="1">
    <location>
        <begin position="258"/>
        <end position="265"/>
    </location>
</feature>
<feature type="transmembrane region" description="Helical; Name=7" evidence="1">
    <location>
        <begin position="266"/>
        <end position="289"/>
    </location>
</feature>
<feature type="topological domain" description="Cytoplasmic" evidence="1">
    <location>
        <begin position="290"/>
        <end position="294" status="greater than"/>
    </location>
</feature>
<feature type="glycosylation site" description="N-linked (GlcNAc...) asparagine" evidence="1">
    <location>
        <position position="7"/>
    </location>
</feature>
<feature type="glycosylation site" description="N-linked (GlcNAc...) asparagine" evidence="1">
    <location>
        <position position="12"/>
    </location>
</feature>
<feature type="glycosylation site" description="N-linked (GlcNAc...) asparagine" evidence="1">
    <location>
        <position position="20"/>
    </location>
</feature>
<feature type="non-terminal residue">
    <location>
        <position position="1"/>
    </location>
</feature>
<feature type="non-terminal residue">
    <location>
        <position position="294"/>
    </location>
</feature>
<sequence length="294" mass="32753">FLDLQLNATEGNVSGPSVGNTSSPCEDMGIEVEVFLTLGLISLLENILVIGAIARNKNLHVPMYFFVCSLAVADMLVSLSNSWETITIYLIANKHLVLSDTSVRHLDNVFDSMICISLVASMCSLLAVAVDRYVTIFYALRYQHLMTGRRCGAIIAGIWALCTGCGPVFIVYYESTYVVVCLVAMFLTMLLLMASLYAHMFLQARAHVRRIAALPGYRSARQRTSMKGAVTLAMLLGVFIVCWAPFFLHLILMISCPQNLYCSCFMSHFNMYLILIMCNSVIDPLIYAFRSQEK</sequence>
<keyword id="KW-1003">Cell membrane</keyword>
<keyword id="KW-0297">G-protein coupled receptor</keyword>
<keyword id="KW-0325">Glycoprotein</keyword>
<keyword id="KW-0472">Membrane</keyword>
<keyword id="KW-0675">Receptor</keyword>
<keyword id="KW-1185">Reference proteome</keyword>
<keyword id="KW-0807">Transducer</keyword>
<keyword id="KW-0812">Transmembrane</keyword>
<keyword id="KW-1133">Transmembrane helix</keyword>
<protein>
    <recommendedName>
        <fullName>Melanocortin receptor 5</fullName>
        <shortName>MC5-R</shortName>
    </recommendedName>
</protein>
<dbReference type="EMBL" id="AF133793">
    <property type="protein sequence ID" value="AAF82610.1"/>
    <property type="molecule type" value="Genomic_DNA"/>
</dbReference>
<dbReference type="SMR" id="Q9MZV8"/>
<dbReference type="FunCoup" id="Q9MZV8">
    <property type="interactions" value="14"/>
</dbReference>
<dbReference type="STRING" id="9823.ENSSSCP00000027505"/>
<dbReference type="GlyCosmos" id="Q9MZV8">
    <property type="glycosylation" value="3 sites, No reported glycans"/>
</dbReference>
<dbReference type="GlyGen" id="Q9MZV8">
    <property type="glycosylation" value="3 sites"/>
</dbReference>
<dbReference type="PaxDb" id="9823-ENSSSCP00000027505"/>
<dbReference type="eggNOG" id="KOG3656">
    <property type="taxonomic scope" value="Eukaryota"/>
</dbReference>
<dbReference type="InParanoid" id="Q9MZV8"/>
<dbReference type="Proteomes" id="UP000008227">
    <property type="component" value="Unplaced"/>
</dbReference>
<dbReference type="Proteomes" id="UP000314985">
    <property type="component" value="Unplaced"/>
</dbReference>
<dbReference type="Proteomes" id="UP000694570">
    <property type="component" value="Unplaced"/>
</dbReference>
<dbReference type="Proteomes" id="UP000694571">
    <property type="component" value="Unplaced"/>
</dbReference>
<dbReference type="Proteomes" id="UP000694720">
    <property type="component" value="Unplaced"/>
</dbReference>
<dbReference type="Proteomes" id="UP000694722">
    <property type="component" value="Unplaced"/>
</dbReference>
<dbReference type="Proteomes" id="UP000694723">
    <property type="component" value="Unplaced"/>
</dbReference>
<dbReference type="Proteomes" id="UP000694724">
    <property type="component" value="Unplaced"/>
</dbReference>
<dbReference type="Proteomes" id="UP000694725">
    <property type="component" value="Unplaced"/>
</dbReference>
<dbReference type="Proteomes" id="UP000694726">
    <property type="component" value="Unplaced"/>
</dbReference>
<dbReference type="Proteomes" id="UP000694727">
    <property type="component" value="Unplaced"/>
</dbReference>
<dbReference type="Proteomes" id="UP000694728">
    <property type="component" value="Unplaced"/>
</dbReference>
<dbReference type="GO" id="GO:0005737">
    <property type="term" value="C:cytoplasm"/>
    <property type="evidence" value="ECO:0000318"/>
    <property type="project" value="GO_Central"/>
</dbReference>
<dbReference type="GO" id="GO:0005886">
    <property type="term" value="C:plasma membrane"/>
    <property type="evidence" value="ECO:0000318"/>
    <property type="project" value="GO_Central"/>
</dbReference>
<dbReference type="GO" id="GO:0004977">
    <property type="term" value="F:melanocortin receptor activity"/>
    <property type="evidence" value="ECO:0000318"/>
    <property type="project" value="GO_Central"/>
</dbReference>
<dbReference type="GO" id="GO:0007189">
    <property type="term" value="P:adenylate cyclase-activating G protein-coupled receptor signaling pathway"/>
    <property type="evidence" value="ECO:0000318"/>
    <property type="project" value="GO_Central"/>
</dbReference>
<dbReference type="GO" id="GO:0019222">
    <property type="term" value="P:regulation of metabolic process"/>
    <property type="evidence" value="ECO:0000318"/>
    <property type="project" value="GO_Central"/>
</dbReference>
<dbReference type="FunFam" id="1.20.1070.10:FF:000077">
    <property type="entry name" value="Melanocortin receptor 4"/>
    <property type="match status" value="1"/>
</dbReference>
<dbReference type="Gene3D" id="1.20.1070.10">
    <property type="entry name" value="Rhodopsin 7-helix transmembrane proteins"/>
    <property type="match status" value="1"/>
</dbReference>
<dbReference type="InterPro" id="IPR000276">
    <property type="entry name" value="GPCR_Rhodpsn"/>
</dbReference>
<dbReference type="InterPro" id="IPR017452">
    <property type="entry name" value="GPCR_Rhodpsn_7TM"/>
</dbReference>
<dbReference type="InterPro" id="IPR001908">
    <property type="entry name" value="MC3-5R"/>
</dbReference>
<dbReference type="InterPro" id="IPR000621">
    <property type="entry name" value="Melancort_rcpt_5"/>
</dbReference>
<dbReference type="InterPro" id="IPR001671">
    <property type="entry name" value="Melcrt_ACTH_rcpt"/>
</dbReference>
<dbReference type="PANTHER" id="PTHR22750">
    <property type="entry name" value="G-PROTEIN COUPLED RECEPTOR"/>
    <property type="match status" value="1"/>
</dbReference>
<dbReference type="Pfam" id="PF00001">
    <property type="entry name" value="7tm_1"/>
    <property type="match status" value="1"/>
</dbReference>
<dbReference type="PRINTS" id="PR00237">
    <property type="entry name" value="GPCRRHODOPSN"/>
</dbReference>
<dbReference type="PRINTS" id="PR00534">
    <property type="entry name" value="MCRFAMILY"/>
</dbReference>
<dbReference type="PRINTS" id="PR00535">
    <property type="entry name" value="MELNOCORTINR"/>
</dbReference>
<dbReference type="PRINTS" id="PR01063">
    <property type="entry name" value="MELNOCORTN5R"/>
</dbReference>
<dbReference type="SUPFAM" id="SSF81321">
    <property type="entry name" value="Family A G protein-coupled receptor-like"/>
    <property type="match status" value="1"/>
</dbReference>
<dbReference type="PROSITE" id="PS00237">
    <property type="entry name" value="G_PROTEIN_RECEP_F1_1"/>
    <property type="match status" value="1"/>
</dbReference>
<dbReference type="PROSITE" id="PS50262">
    <property type="entry name" value="G_PROTEIN_RECEP_F1_2"/>
    <property type="match status" value="1"/>
</dbReference>
<name>MC5R_PIG</name>
<organism>
    <name type="scientific">Sus scrofa</name>
    <name type="common">Pig</name>
    <dbReference type="NCBI Taxonomy" id="9823"/>
    <lineage>
        <taxon>Eukaryota</taxon>
        <taxon>Metazoa</taxon>
        <taxon>Chordata</taxon>
        <taxon>Craniata</taxon>
        <taxon>Vertebrata</taxon>
        <taxon>Euteleostomi</taxon>
        <taxon>Mammalia</taxon>
        <taxon>Eutheria</taxon>
        <taxon>Laurasiatheria</taxon>
        <taxon>Artiodactyla</taxon>
        <taxon>Suina</taxon>
        <taxon>Suidae</taxon>
        <taxon>Sus</taxon>
    </lineage>
</organism>
<comment type="function">
    <text>Receptor for MSH (alpha, beta and gamma) and ACTH. The activity of this receptor is mediated by G proteins which activate adenylate cyclase. This receptor is a possible mediator of the immunomodulation properties of melanocortins.</text>
</comment>
<comment type="subcellular location">
    <subcellularLocation>
        <location>Cell membrane</location>
        <topology>Multi-pass membrane protein</topology>
    </subcellularLocation>
</comment>
<comment type="similarity">
    <text evidence="2">Belongs to the G-protein coupled receptor 1 family.</text>
</comment>
<accession>Q9MZV8</accession>
<gene>
    <name type="primary">MC5R</name>
</gene>
<proteinExistence type="inferred from homology"/>
<evidence type="ECO:0000255" key="1"/>
<evidence type="ECO:0000255" key="2">
    <source>
        <dbReference type="PROSITE-ProRule" id="PRU00521"/>
    </source>
</evidence>
<reference key="1">
    <citation type="journal article" date="2000" name="Anim. Genet.">
        <title>The porcine melanocortin-5 receptor (MC5R) gene: polymorphisms, linkage and physical mapping.</title>
        <authorList>
            <person name="Kim K.S."/>
            <person name="Marklund S."/>
            <person name="Rothschild M.F."/>
        </authorList>
    </citation>
    <scope>NUCLEOTIDE SEQUENCE [GENOMIC DNA]</scope>
</reference>